<name>NADD_GLUDA</name>
<proteinExistence type="inferred from homology"/>
<dbReference type="EC" id="2.7.7.18" evidence="1"/>
<dbReference type="EMBL" id="AM889285">
    <property type="protein sequence ID" value="CAP54884.1"/>
    <property type="molecule type" value="Genomic_DNA"/>
</dbReference>
<dbReference type="EMBL" id="CP001189">
    <property type="protein sequence ID" value="ACI50866.1"/>
    <property type="status" value="ALT_SEQ"/>
    <property type="molecule type" value="Genomic_DNA"/>
</dbReference>
<dbReference type="RefSeq" id="WP_012223796.1">
    <property type="nucleotide sequence ID" value="NC_010125.1"/>
</dbReference>
<dbReference type="SMR" id="A9HC14"/>
<dbReference type="STRING" id="272568.GDI0941"/>
<dbReference type="KEGG" id="gdi:GDI0941"/>
<dbReference type="KEGG" id="gdj:Gdia_1083"/>
<dbReference type="eggNOG" id="COG1057">
    <property type="taxonomic scope" value="Bacteria"/>
</dbReference>
<dbReference type="HOGENOM" id="CLU_688428_0_0_5"/>
<dbReference type="OrthoDB" id="5295945at2"/>
<dbReference type="UniPathway" id="UPA00253">
    <property type="reaction ID" value="UER00332"/>
</dbReference>
<dbReference type="Proteomes" id="UP000001176">
    <property type="component" value="Chromosome"/>
</dbReference>
<dbReference type="GO" id="GO:0005524">
    <property type="term" value="F:ATP binding"/>
    <property type="evidence" value="ECO:0007669"/>
    <property type="project" value="UniProtKB-KW"/>
</dbReference>
<dbReference type="GO" id="GO:0004515">
    <property type="term" value="F:nicotinate-nucleotide adenylyltransferase activity"/>
    <property type="evidence" value="ECO:0007669"/>
    <property type="project" value="UniProtKB-UniRule"/>
</dbReference>
<dbReference type="GO" id="GO:0009435">
    <property type="term" value="P:NAD biosynthetic process"/>
    <property type="evidence" value="ECO:0007669"/>
    <property type="project" value="UniProtKB-UniRule"/>
</dbReference>
<dbReference type="CDD" id="cd02165">
    <property type="entry name" value="NMNAT"/>
    <property type="match status" value="1"/>
</dbReference>
<dbReference type="Gene3D" id="3.40.50.620">
    <property type="entry name" value="HUPs"/>
    <property type="match status" value="1"/>
</dbReference>
<dbReference type="HAMAP" id="MF_00244">
    <property type="entry name" value="NaMN_adenylyltr"/>
    <property type="match status" value="1"/>
</dbReference>
<dbReference type="InterPro" id="IPR004821">
    <property type="entry name" value="Cyt_trans-like"/>
</dbReference>
<dbReference type="InterPro" id="IPR005248">
    <property type="entry name" value="NadD/NMNAT"/>
</dbReference>
<dbReference type="InterPro" id="IPR014729">
    <property type="entry name" value="Rossmann-like_a/b/a_fold"/>
</dbReference>
<dbReference type="NCBIfam" id="NF000843">
    <property type="entry name" value="PRK00071.2-2"/>
    <property type="match status" value="1"/>
</dbReference>
<dbReference type="PANTHER" id="PTHR39321">
    <property type="entry name" value="NICOTINATE-NUCLEOTIDE ADENYLYLTRANSFERASE-RELATED"/>
    <property type="match status" value="1"/>
</dbReference>
<dbReference type="PANTHER" id="PTHR39321:SF3">
    <property type="entry name" value="PHOSPHOPANTETHEINE ADENYLYLTRANSFERASE"/>
    <property type="match status" value="1"/>
</dbReference>
<dbReference type="Pfam" id="PF01467">
    <property type="entry name" value="CTP_transf_like"/>
    <property type="match status" value="1"/>
</dbReference>
<dbReference type="SUPFAM" id="SSF52374">
    <property type="entry name" value="Nucleotidylyl transferase"/>
    <property type="match status" value="1"/>
</dbReference>
<organism>
    <name type="scientific">Gluconacetobacter diazotrophicus (strain ATCC 49037 / DSM 5601 / CCUG 37298 / CIP 103539 / LMG 7603 / PAl5)</name>
    <dbReference type="NCBI Taxonomy" id="272568"/>
    <lineage>
        <taxon>Bacteria</taxon>
        <taxon>Pseudomonadati</taxon>
        <taxon>Pseudomonadota</taxon>
        <taxon>Alphaproteobacteria</taxon>
        <taxon>Acetobacterales</taxon>
        <taxon>Acetobacteraceae</taxon>
        <taxon>Gluconacetobacter</taxon>
    </lineage>
</organism>
<feature type="chain" id="PRO_0000336694" description="Probable nicotinate-nucleotide adenylyltransferase">
    <location>
        <begin position="1"/>
        <end position="215"/>
    </location>
</feature>
<feature type="sequence conflict" description="In Ref. 2; ACI50866." evidence="2" ref="2">
    <original>A</original>
    <variation>P</variation>
    <location>
        <position position="5"/>
    </location>
</feature>
<feature type="sequence conflict" description="In Ref. 2; ACI50866." evidence="2" ref="2">
    <original>V</original>
    <variation>L</variation>
    <location>
        <position position="17"/>
    </location>
</feature>
<feature type="sequence conflict" description="In Ref. 2; ACI50866." evidence="2" ref="2">
    <original>H</original>
    <variation>Q</variation>
    <location>
        <position position="39"/>
    </location>
</feature>
<feature type="sequence conflict" description="In Ref. 2; ACI50866." evidence="2" ref="2">
    <original>I</original>
    <variation>V</variation>
    <location>
        <position position="49"/>
    </location>
</feature>
<feature type="sequence conflict" description="In Ref. 2; ACI50866." evidence="2" ref="2">
    <original>Y</original>
    <variation>N</variation>
    <location>
        <position position="53"/>
    </location>
</feature>
<feature type="sequence conflict" description="In Ref. 2; ACI50866." evidence="2" ref="2">
    <original>F</original>
    <variation>V</variation>
    <location>
        <position position="75"/>
    </location>
</feature>
<gene>
    <name evidence="1" type="primary">nadD</name>
    <name type="ordered locus">GDI0941</name>
    <name type="ordered locus">Gdia_1083</name>
</gene>
<comment type="function">
    <text evidence="1">Catalyzes the reversible adenylation of nicotinate mononucleotide (NaMN) to nicotinic acid adenine dinucleotide (NaAD).</text>
</comment>
<comment type="catalytic activity">
    <reaction evidence="1">
        <text>nicotinate beta-D-ribonucleotide + ATP + H(+) = deamido-NAD(+) + diphosphate</text>
        <dbReference type="Rhea" id="RHEA:22860"/>
        <dbReference type="ChEBI" id="CHEBI:15378"/>
        <dbReference type="ChEBI" id="CHEBI:30616"/>
        <dbReference type="ChEBI" id="CHEBI:33019"/>
        <dbReference type="ChEBI" id="CHEBI:57502"/>
        <dbReference type="ChEBI" id="CHEBI:58437"/>
        <dbReference type="EC" id="2.7.7.18"/>
    </reaction>
</comment>
<comment type="pathway">
    <text evidence="1">Cofactor biosynthesis; NAD(+) biosynthesis; deamido-NAD(+) from nicotinate D-ribonucleotide: step 1/1.</text>
</comment>
<comment type="similarity">
    <text evidence="1">Belongs to the NadD family.</text>
</comment>
<comment type="sequence caution" evidence="2">
    <conflict type="erroneous termination">
        <sequence resource="EMBL-CDS" id="ACI50866"/>
    </conflict>
    <text>Extended C-terminus.</text>
</comment>
<comment type="sequence caution" evidence="2">
    <conflict type="frameshift">
        <sequence resource="EMBL-CDS" id="ACI50866"/>
    </conflict>
</comment>
<reference key="1">
    <citation type="journal article" date="2009" name="BMC Genomics">
        <title>Complete genome sequence of the sugarcane nitrogen-fixing endophyte Gluconacetobacter diazotrophicus Pal5.</title>
        <authorList>
            <person name="Bertalan M."/>
            <person name="Albano R."/>
            <person name="de Padua V."/>
            <person name="Rouws L."/>
            <person name="Rojas C."/>
            <person name="Hemerly A."/>
            <person name="Teixeira K."/>
            <person name="Schwab S."/>
            <person name="Araujo J."/>
            <person name="Oliveira A."/>
            <person name="Franca L."/>
            <person name="Magalhaes V."/>
            <person name="Alqueres S."/>
            <person name="Cardoso A."/>
            <person name="Almeida W."/>
            <person name="Loureiro M.M."/>
            <person name="Nogueira E."/>
            <person name="Cidade D."/>
            <person name="Oliveira D."/>
            <person name="Simao T."/>
            <person name="Macedo J."/>
            <person name="Valadao A."/>
            <person name="Dreschsel M."/>
            <person name="Freitas F."/>
            <person name="Vidal M."/>
            <person name="Guedes H."/>
            <person name="Rodrigues E."/>
            <person name="Meneses C."/>
            <person name="Brioso P."/>
            <person name="Pozzer L."/>
            <person name="Figueiredo D."/>
            <person name="Montano H."/>
            <person name="Junior J."/>
            <person name="de Souza Filho G."/>
            <person name="Martin Quintana Flores V."/>
            <person name="Ferreira B."/>
            <person name="Branco A."/>
            <person name="Gonzalez P."/>
            <person name="Guillobel H."/>
            <person name="Lemos M."/>
            <person name="Seibel L."/>
            <person name="Macedo J."/>
            <person name="Alves-Ferreira M."/>
            <person name="Sachetto-Martins G."/>
            <person name="Coelho A."/>
            <person name="Santos E."/>
            <person name="Amaral G."/>
            <person name="Neves A."/>
            <person name="Pacheco A.B."/>
            <person name="Carvalho D."/>
            <person name="Lery L."/>
            <person name="Bisch P."/>
            <person name="Rossle S.C."/>
            <person name="Urmenyi T."/>
            <person name="Rael Pereira A."/>
            <person name="Silva R."/>
            <person name="Rondinelli E."/>
            <person name="von Kruger W."/>
            <person name="Martins O."/>
            <person name="Baldani J.I."/>
            <person name="Ferreira P.C."/>
        </authorList>
    </citation>
    <scope>NUCLEOTIDE SEQUENCE [LARGE SCALE GENOMIC DNA]</scope>
    <source>
        <strain>ATCC 49037 / DSM 5601 / CCUG 37298 / CIP 103539 / LMG 7603 / PAl5</strain>
    </source>
</reference>
<reference key="2">
    <citation type="journal article" date="2010" name="Stand. Genomic Sci.">
        <title>Two genome sequences of the same bacterial strain, Gluconacetobacter diazotrophicus PAl 5, suggest a new standard in genome sequence submission.</title>
        <authorList>
            <person name="Giongo A."/>
            <person name="Tyler H.L."/>
            <person name="Zipperer U.N."/>
            <person name="Triplett E.W."/>
        </authorList>
    </citation>
    <scope>NUCLEOTIDE SEQUENCE [LARGE SCALE GENOMIC DNA]</scope>
    <source>
        <strain>ATCC 49037 / DSM 5601 / CCUG 37298 / CIP 103539 / LMG 7603 / PAl5</strain>
    </source>
</reference>
<sequence>MSSIAAWGDGRRTRIGVLGGSFNPVHDGHLQLARRALRHLRLDQVWLMISPGYPLKPVQGMAPFDVRLASVAARFDGRRLVATDIERRLGTRYTVDTLGLLRLRFPHAAFVWLMGADGLADLARWRDWRRIVSLVPFAVLPRPTYNPGALRGEAAVALARWRRPARQAPILADCAPCAWAFLPAPQIGISATELRASALRQRSRHPTHKHTTHQE</sequence>
<evidence type="ECO:0000255" key="1">
    <source>
        <dbReference type="HAMAP-Rule" id="MF_00244"/>
    </source>
</evidence>
<evidence type="ECO:0000305" key="2"/>
<keyword id="KW-0067">ATP-binding</keyword>
<keyword id="KW-0520">NAD</keyword>
<keyword id="KW-0547">Nucleotide-binding</keyword>
<keyword id="KW-0548">Nucleotidyltransferase</keyword>
<keyword id="KW-0662">Pyridine nucleotide biosynthesis</keyword>
<keyword id="KW-1185">Reference proteome</keyword>
<keyword id="KW-0808">Transferase</keyword>
<accession>A9HC14</accession>
<accession>B5ZGF8</accession>
<protein>
    <recommendedName>
        <fullName evidence="1">Probable nicotinate-nucleotide adenylyltransferase</fullName>
        <ecNumber evidence="1">2.7.7.18</ecNumber>
    </recommendedName>
    <alternativeName>
        <fullName evidence="1">Deamido-NAD(+) diphosphorylase</fullName>
    </alternativeName>
    <alternativeName>
        <fullName evidence="1">Deamido-NAD(+) pyrophosphorylase</fullName>
    </alternativeName>
    <alternativeName>
        <fullName evidence="1">Nicotinate mononucleotide adenylyltransferase</fullName>
        <shortName evidence="1">NaMN adenylyltransferase</shortName>
    </alternativeName>
</protein>